<feature type="chain" id="PRO_0000254316" description="ATP synthase subunit beta">
    <location>
        <begin position="1"/>
        <end position="476"/>
    </location>
</feature>
<feature type="binding site" evidence="1">
    <location>
        <begin position="154"/>
        <end position="161"/>
    </location>
    <ligand>
        <name>ATP</name>
        <dbReference type="ChEBI" id="CHEBI:30616"/>
    </ligand>
</feature>
<gene>
    <name evidence="1" type="primary">atpD</name>
    <name type="ordered locus">Nwi_0433</name>
</gene>
<dbReference type="EC" id="7.1.2.2" evidence="1"/>
<dbReference type="EMBL" id="CP000115">
    <property type="protein sequence ID" value="ABA03700.1"/>
    <property type="molecule type" value="Genomic_DNA"/>
</dbReference>
<dbReference type="RefSeq" id="WP_011313764.1">
    <property type="nucleotide sequence ID" value="NC_007406.1"/>
</dbReference>
<dbReference type="SMR" id="Q3SVJ1"/>
<dbReference type="STRING" id="323098.Nwi_0433"/>
<dbReference type="KEGG" id="nwi:Nwi_0433"/>
<dbReference type="eggNOG" id="COG0055">
    <property type="taxonomic scope" value="Bacteria"/>
</dbReference>
<dbReference type="HOGENOM" id="CLU_022398_0_2_5"/>
<dbReference type="OrthoDB" id="9801639at2"/>
<dbReference type="Proteomes" id="UP000002531">
    <property type="component" value="Chromosome"/>
</dbReference>
<dbReference type="GO" id="GO:0005886">
    <property type="term" value="C:plasma membrane"/>
    <property type="evidence" value="ECO:0007669"/>
    <property type="project" value="UniProtKB-SubCell"/>
</dbReference>
<dbReference type="GO" id="GO:0045259">
    <property type="term" value="C:proton-transporting ATP synthase complex"/>
    <property type="evidence" value="ECO:0007669"/>
    <property type="project" value="UniProtKB-KW"/>
</dbReference>
<dbReference type="GO" id="GO:0005524">
    <property type="term" value="F:ATP binding"/>
    <property type="evidence" value="ECO:0007669"/>
    <property type="project" value="UniProtKB-UniRule"/>
</dbReference>
<dbReference type="GO" id="GO:0016887">
    <property type="term" value="F:ATP hydrolysis activity"/>
    <property type="evidence" value="ECO:0007669"/>
    <property type="project" value="InterPro"/>
</dbReference>
<dbReference type="GO" id="GO:0046933">
    <property type="term" value="F:proton-transporting ATP synthase activity, rotational mechanism"/>
    <property type="evidence" value="ECO:0007669"/>
    <property type="project" value="UniProtKB-UniRule"/>
</dbReference>
<dbReference type="CDD" id="cd18110">
    <property type="entry name" value="ATP-synt_F1_beta_C"/>
    <property type="match status" value="1"/>
</dbReference>
<dbReference type="CDD" id="cd18115">
    <property type="entry name" value="ATP-synt_F1_beta_N"/>
    <property type="match status" value="1"/>
</dbReference>
<dbReference type="CDD" id="cd01133">
    <property type="entry name" value="F1-ATPase_beta_CD"/>
    <property type="match status" value="1"/>
</dbReference>
<dbReference type="FunFam" id="1.10.1140.10:FF:000001">
    <property type="entry name" value="ATP synthase subunit beta"/>
    <property type="match status" value="1"/>
</dbReference>
<dbReference type="FunFam" id="2.40.10.170:FF:000004">
    <property type="entry name" value="ATP synthase subunit beta"/>
    <property type="match status" value="1"/>
</dbReference>
<dbReference type="FunFam" id="3.40.50.300:FF:000026">
    <property type="entry name" value="ATP synthase subunit beta"/>
    <property type="match status" value="1"/>
</dbReference>
<dbReference type="Gene3D" id="2.40.10.170">
    <property type="match status" value="1"/>
</dbReference>
<dbReference type="Gene3D" id="1.10.1140.10">
    <property type="entry name" value="Bovine Mitochondrial F1-atpase, Atp Synthase Beta Chain, Chain D, domain 3"/>
    <property type="match status" value="1"/>
</dbReference>
<dbReference type="Gene3D" id="3.40.50.300">
    <property type="entry name" value="P-loop containing nucleotide triphosphate hydrolases"/>
    <property type="match status" value="1"/>
</dbReference>
<dbReference type="HAMAP" id="MF_01347">
    <property type="entry name" value="ATP_synth_beta_bact"/>
    <property type="match status" value="1"/>
</dbReference>
<dbReference type="InterPro" id="IPR003593">
    <property type="entry name" value="AAA+_ATPase"/>
</dbReference>
<dbReference type="InterPro" id="IPR055190">
    <property type="entry name" value="ATP-synt_VA_C"/>
</dbReference>
<dbReference type="InterPro" id="IPR005722">
    <property type="entry name" value="ATP_synth_F1_bsu"/>
</dbReference>
<dbReference type="InterPro" id="IPR020003">
    <property type="entry name" value="ATPase_a/bsu_AS"/>
</dbReference>
<dbReference type="InterPro" id="IPR050053">
    <property type="entry name" value="ATPase_alpha/beta_chains"/>
</dbReference>
<dbReference type="InterPro" id="IPR004100">
    <property type="entry name" value="ATPase_F1/V1/A1_a/bsu_N"/>
</dbReference>
<dbReference type="InterPro" id="IPR036121">
    <property type="entry name" value="ATPase_F1/V1/A1_a/bsu_N_sf"/>
</dbReference>
<dbReference type="InterPro" id="IPR000194">
    <property type="entry name" value="ATPase_F1/V1/A1_a/bsu_nucl-bd"/>
</dbReference>
<dbReference type="InterPro" id="IPR024034">
    <property type="entry name" value="ATPase_F1/V1_b/a_C"/>
</dbReference>
<dbReference type="InterPro" id="IPR027417">
    <property type="entry name" value="P-loop_NTPase"/>
</dbReference>
<dbReference type="NCBIfam" id="TIGR01039">
    <property type="entry name" value="atpD"/>
    <property type="match status" value="1"/>
</dbReference>
<dbReference type="PANTHER" id="PTHR15184">
    <property type="entry name" value="ATP SYNTHASE"/>
    <property type="match status" value="1"/>
</dbReference>
<dbReference type="PANTHER" id="PTHR15184:SF71">
    <property type="entry name" value="ATP SYNTHASE SUBUNIT BETA, MITOCHONDRIAL"/>
    <property type="match status" value="1"/>
</dbReference>
<dbReference type="Pfam" id="PF00006">
    <property type="entry name" value="ATP-synt_ab"/>
    <property type="match status" value="1"/>
</dbReference>
<dbReference type="Pfam" id="PF02874">
    <property type="entry name" value="ATP-synt_ab_N"/>
    <property type="match status" value="1"/>
</dbReference>
<dbReference type="Pfam" id="PF22919">
    <property type="entry name" value="ATP-synt_VA_C"/>
    <property type="match status" value="1"/>
</dbReference>
<dbReference type="PIRSF" id="PIRSF039072">
    <property type="entry name" value="ATPase_subunit_beta"/>
    <property type="match status" value="1"/>
</dbReference>
<dbReference type="SMART" id="SM00382">
    <property type="entry name" value="AAA"/>
    <property type="match status" value="1"/>
</dbReference>
<dbReference type="SUPFAM" id="SSF47917">
    <property type="entry name" value="C-terminal domain of alpha and beta subunits of F1 ATP synthase"/>
    <property type="match status" value="1"/>
</dbReference>
<dbReference type="SUPFAM" id="SSF50615">
    <property type="entry name" value="N-terminal domain of alpha and beta subunits of F1 ATP synthase"/>
    <property type="match status" value="1"/>
</dbReference>
<dbReference type="SUPFAM" id="SSF52540">
    <property type="entry name" value="P-loop containing nucleoside triphosphate hydrolases"/>
    <property type="match status" value="1"/>
</dbReference>
<dbReference type="PROSITE" id="PS00152">
    <property type="entry name" value="ATPASE_ALPHA_BETA"/>
    <property type="match status" value="1"/>
</dbReference>
<evidence type="ECO:0000255" key="1">
    <source>
        <dbReference type="HAMAP-Rule" id="MF_01347"/>
    </source>
</evidence>
<protein>
    <recommendedName>
        <fullName evidence="1">ATP synthase subunit beta</fullName>
        <ecNumber evidence="1">7.1.2.2</ecNumber>
    </recommendedName>
    <alternativeName>
        <fullName evidence="1">ATP synthase F1 sector subunit beta</fullName>
    </alternativeName>
    <alternativeName>
        <fullName evidence="1">F-ATPase subunit beta</fullName>
    </alternativeName>
</protein>
<sequence>MATAANQVGRITQVIGAVVDVQFEGHLPAILNAIETKNGENRLVLEVAQHLGESTVRTIAMDTTEGLVRGQDVTDTGAPIRVPVGAGTLGRIMNVIGEPVDEQGPVKADDLRPIHAEAPSYTDQSTEAEILVTGIKVVDLLAPYAKGGKIGLFGGAGVGKTVLIQELINNVAKAHGGYSVFAGVGERTREGNDLYHEFIESGVNKKGGGEGSKCALVYGQMNEPPGARARVALSGLTVAEHFRDQGQDVLFFVDNIFRFTQAGSEVSALLGRIPSAVGYQPTLATDMGALQERITTTNKGSITSVQAIYVPADDLTDPAPATSFAHLDATTVLNRAISEKGIYPAVDPLDSTSRMLSPLIVGEEHYQTARLVQQVLQRYKSLQDIIAILGMDELSEEDKLTVARARKVERFLSQPFHVAEVFTGSPGKFVDLADTIKGFRDLCQGKYDHLPEAAFYMVGTIEEAVEKGKKLAAEAA</sequence>
<name>ATPB_NITWN</name>
<reference key="1">
    <citation type="journal article" date="2006" name="Appl. Environ. Microbiol.">
        <title>Genome sequence of the chemolithoautotrophic nitrite-oxidizing bacterium Nitrobacter winogradskyi Nb-255.</title>
        <authorList>
            <person name="Starkenburg S.R."/>
            <person name="Chain P.S.G."/>
            <person name="Sayavedra-Soto L.A."/>
            <person name="Hauser L."/>
            <person name="Land M.L."/>
            <person name="Larimer F.W."/>
            <person name="Malfatti S.A."/>
            <person name="Klotz M.G."/>
            <person name="Bottomley P.J."/>
            <person name="Arp D.J."/>
            <person name="Hickey W.J."/>
        </authorList>
    </citation>
    <scope>NUCLEOTIDE SEQUENCE [LARGE SCALE GENOMIC DNA]</scope>
    <source>
        <strain>ATCC 25391 / DSM 10237 / CIP 104748 / NCIMB 11846 / Nb-255</strain>
    </source>
</reference>
<keyword id="KW-0066">ATP synthesis</keyword>
<keyword id="KW-0067">ATP-binding</keyword>
<keyword id="KW-0997">Cell inner membrane</keyword>
<keyword id="KW-1003">Cell membrane</keyword>
<keyword id="KW-0139">CF(1)</keyword>
<keyword id="KW-0375">Hydrogen ion transport</keyword>
<keyword id="KW-0406">Ion transport</keyword>
<keyword id="KW-0472">Membrane</keyword>
<keyword id="KW-0547">Nucleotide-binding</keyword>
<keyword id="KW-1185">Reference proteome</keyword>
<keyword id="KW-1278">Translocase</keyword>
<keyword id="KW-0813">Transport</keyword>
<proteinExistence type="inferred from homology"/>
<comment type="function">
    <text evidence="1">Produces ATP from ADP in the presence of a proton gradient across the membrane. The catalytic sites are hosted primarily by the beta subunits.</text>
</comment>
<comment type="catalytic activity">
    <reaction evidence="1">
        <text>ATP + H2O + 4 H(+)(in) = ADP + phosphate + 5 H(+)(out)</text>
        <dbReference type="Rhea" id="RHEA:57720"/>
        <dbReference type="ChEBI" id="CHEBI:15377"/>
        <dbReference type="ChEBI" id="CHEBI:15378"/>
        <dbReference type="ChEBI" id="CHEBI:30616"/>
        <dbReference type="ChEBI" id="CHEBI:43474"/>
        <dbReference type="ChEBI" id="CHEBI:456216"/>
        <dbReference type="EC" id="7.1.2.2"/>
    </reaction>
</comment>
<comment type="subunit">
    <text evidence="1">F-type ATPases have 2 components, CF(1) - the catalytic core - and CF(0) - the membrane proton channel. CF(1) has five subunits: alpha(3), beta(3), gamma(1), delta(1), epsilon(1). CF(0) has three main subunits: a(1), b(2) and c(9-12). The alpha and beta chains form an alternating ring which encloses part of the gamma chain. CF(1) is attached to CF(0) by a central stalk formed by the gamma and epsilon chains, while a peripheral stalk is formed by the delta and b chains.</text>
</comment>
<comment type="subcellular location">
    <subcellularLocation>
        <location evidence="1">Cell inner membrane</location>
        <topology evidence="1">Peripheral membrane protein</topology>
    </subcellularLocation>
</comment>
<comment type="similarity">
    <text evidence="1">Belongs to the ATPase alpha/beta chains family.</text>
</comment>
<accession>Q3SVJ1</accession>
<organism>
    <name type="scientific">Nitrobacter winogradskyi (strain ATCC 25391 / DSM 10237 / CIP 104748 / NCIMB 11846 / Nb-255)</name>
    <dbReference type="NCBI Taxonomy" id="323098"/>
    <lineage>
        <taxon>Bacteria</taxon>
        <taxon>Pseudomonadati</taxon>
        <taxon>Pseudomonadota</taxon>
        <taxon>Alphaproteobacteria</taxon>
        <taxon>Hyphomicrobiales</taxon>
        <taxon>Nitrobacteraceae</taxon>
        <taxon>Nitrobacter</taxon>
    </lineage>
</organism>